<dbReference type="EMBL" id="AK010827">
    <property type="protein sequence ID" value="BAB27209.1"/>
    <property type="molecule type" value="mRNA"/>
</dbReference>
<dbReference type="EMBL" id="AK152377">
    <property type="protein sequence ID" value="BAE31166.1"/>
    <property type="molecule type" value="mRNA"/>
</dbReference>
<dbReference type="EMBL" id="BC062175">
    <property type="protein sequence ID" value="AAH62175.1"/>
    <property type="molecule type" value="mRNA"/>
</dbReference>
<dbReference type="CCDS" id="CCDS36442.2"/>
<dbReference type="RefSeq" id="NP_084036.2">
    <property type="nucleotide sequence ID" value="NM_029760.2"/>
</dbReference>
<dbReference type="SMR" id="Q9CWD8"/>
<dbReference type="FunCoup" id="Q9CWD8">
    <property type="interactions" value="1226"/>
</dbReference>
<dbReference type="IntAct" id="Q9CWD8">
    <property type="interactions" value="1"/>
</dbReference>
<dbReference type="STRING" id="10090.ENSMUSP00000044292"/>
<dbReference type="iPTMnet" id="Q9CWD8"/>
<dbReference type="PhosphoSitePlus" id="Q9CWD8"/>
<dbReference type="jPOST" id="Q9CWD8"/>
<dbReference type="PaxDb" id="10090-ENSMUSP00000044292"/>
<dbReference type="PeptideAtlas" id="Q9CWD8"/>
<dbReference type="ProteomicsDB" id="293805"/>
<dbReference type="Pumba" id="Q9CWD8"/>
<dbReference type="Antibodypedia" id="23093">
    <property type="antibodies" value="265 antibodies from 23 providers"/>
</dbReference>
<dbReference type="Ensembl" id="ENSMUST00000040090.16">
    <property type="protein sequence ID" value="ENSMUSP00000044292.10"/>
    <property type="gene ID" value="ENSMUSG00000035142.19"/>
</dbReference>
<dbReference type="GeneID" id="76826"/>
<dbReference type="KEGG" id="mmu:76826"/>
<dbReference type="UCSC" id="uc007nnh.2">
    <property type="organism name" value="mouse"/>
</dbReference>
<dbReference type="AGR" id="MGI:1924076"/>
<dbReference type="CTD" id="80224"/>
<dbReference type="MGI" id="MGI:1924076">
    <property type="gene designation" value="Nubpl"/>
</dbReference>
<dbReference type="VEuPathDB" id="HostDB:ENSMUSG00000035142"/>
<dbReference type="eggNOG" id="KOG3022">
    <property type="taxonomic scope" value="Eukaryota"/>
</dbReference>
<dbReference type="GeneTree" id="ENSGT00950000183193"/>
<dbReference type="HOGENOM" id="CLU_024839_0_2_1"/>
<dbReference type="InParanoid" id="Q9CWD8"/>
<dbReference type="OMA" id="CNHESHI"/>
<dbReference type="OrthoDB" id="1741334at2759"/>
<dbReference type="PhylomeDB" id="Q9CWD8"/>
<dbReference type="TreeFam" id="TF323196"/>
<dbReference type="Reactome" id="R-MMU-6799198">
    <property type="pathway name" value="Complex I biogenesis"/>
</dbReference>
<dbReference type="BioGRID-ORCS" id="76826">
    <property type="hits" value="11 hits in 74 CRISPR screens"/>
</dbReference>
<dbReference type="ChiTaRS" id="Nubpl">
    <property type="organism name" value="mouse"/>
</dbReference>
<dbReference type="PRO" id="PR:Q9CWD8"/>
<dbReference type="Proteomes" id="UP000000589">
    <property type="component" value="Chromosome 12"/>
</dbReference>
<dbReference type="RNAct" id="Q9CWD8">
    <property type="molecule type" value="protein"/>
</dbReference>
<dbReference type="Bgee" id="ENSMUSG00000035142">
    <property type="expression patterns" value="Expressed in heart left ventricle and 75 other cell types or tissues"/>
</dbReference>
<dbReference type="ExpressionAtlas" id="Q9CWD8">
    <property type="expression patterns" value="baseline and differential"/>
</dbReference>
<dbReference type="GO" id="GO:0005739">
    <property type="term" value="C:mitochondrion"/>
    <property type="evidence" value="ECO:0007005"/>
    <property type="project" value="MGI"/>
</dbReference>
<dbReference type="GO" id="GO:0005886">
    <property type="term" value="C:plasma membrane"/>
    <property type="evidence" value="ECO:0007669"/>
    <property type="project" value="Ensembl"/>
</dbReference>
<dbReference type="GO" id="GO:0051539">
    <property type="term" value="F:4 iron, 4 sulfur cluster binding"/>
    <property type="evidence" value="ECO:0007669"/>
    <property type="project" value="UniProtKB-KW"/>
</dbReference>
<dbReference type="GO" id="GO:0005524">
    <property type="term" value="F:ATP binding"/>
    <property type="evidence" value="ECO:0007669"/>
    <property type="project" value="UniProtKB-KW"/>
</dbReference>
<dbReference type="GO" id="GO:0140663">
    <property type="term" value="F:ATP-dependent FeS chaperone activity"/>
    <property type="evidence" value="ECO:0007669"/>
    <property type="project" value="InterPro"/>
</dbReference>
<dbReference type="GO" id="GO:0046872">
    <property type="term" value="F:metal ion binding"/>
    <property type="evidence" value="ECO:0007669"/>
    <property type="project" value="UniProtKB-KW"/>
</dbReference>
<dbReference type="GO" id="GO:0016226">
    <property type="term" value="P:iron-sulfur cluster assembly"/>
    <property type="evidence" value="ECO:0007669"/>
    <property type="project" value="InterPro"/>
</dbReference>
<dbReference type="GO" id="GO:0032981">
    <property type="term" value="P:mitochondrial respiratory chain complex I assembly"/>
    <property type="evidence" value="ECO:0007669"/>
    <property type="project" value="Ensembl"/>
</dbReference>
<dbReference type="CDD" id="cd02037">
    <property type="entry name" value="Mrp_NBP35"/>
    <property type="match status" value="1"/>
</dbReference>
<dbReference type="FunFam" id="3.40.50.300:FF:000709">
    <property type="entry name" value="Iron-sulfur protein NUBPL isoform X1"/>
    <property type="match status" value="1"/>
</dbReference>
<dbReference type="Gene3D" id="3.40.50.300">
    <property type="entry name" value="P-loop containing nucleotide triphosphate hydrolases"/>
    <property type="match status" value="1"/>
</dbReference>
<dbReference type="HAMAP" id="MF_02040">
    <property type="entry name" value="Mrp_NBP35"/>
    <property type="match status" value="1"/>
</dbReference>
<dbReference type="InterPro" id="IPR000808">
    <property type="entry name" value="Mrp-like_CS"/>
</dbReference>
<dbReference type="InterPro" id="IPR019591">
    <property type="entry name" value="Mrp/NBP35_ATP-bd"/>
</dbReference>
<dbReference type="InterPro" id="IPR044304">
    <property type="entry name" value="NUBPL-like"/>
</dbReference>
<dbReference type="InterPro" id="IPR027417">
    <property type="entry name" value="P-loop_NTPase"/>
</dbReference>
<dbReference type="InterPro" id="IPR033756">
    <property type="entry name" value="YlxH/NBP35"/>
</dbReference>
<dbReference type="PANTHER" id="PTHR42961">
    <property type="entry name" value="IRON-SULFUR PROTEIN NUBPL"/>
    <property type="match status" value="1"/>
</dbReference>
<dbReference type="PANTHER" id="PTHR42961:SF2">
    <property type="entry name" value="IRON-SULFUR PROTEIN NUBPL"/>
    <property type="match status" value="1"/>
</dbReference>
<dbReference type="Pfam" id="PF10609">
    <property type="entry name" value="ParA"/>
    <property type="match status" value="1"/>
</dbReference>
<dbReference type="SUPFAM" id="SSF52540">
    <property type="entry name" value="P-loop containing nucleoside triphosphate hydrolases"/>
    <property type="match status" value="1"/>
</dbReference>
<dbReference type="PROSITE" id="PS01215">
    <property type="entry name" value="MRP"/>
    <property type="match status" value="1"/>
</dbReference>
<proteinExistence type="evidence at protein level"/>
<keyword id="KW-0004">4Fe-4S</keyword>
<keyword id="KW-0067">ATP-binding</keyword>
<keyword id="KW-0408">Iron</keyword>
<keyword id="KW-0411">Iron-sulfur</keyword>
<keyword id="KW-0479">Metal-binding</keyword>
<keyword id="KW-0496">Mitochondrion</keyword>
<keyword id="KW-0547">Nucleotide-binding</keyword>
<keyword id="KW-1185">Reference proteome</keyword>
<keyword id="KW-0809">Transit peptide</keyword>
<protein>
    <recommendedName>
        <fullName evidence="4">Iron-sulfur cluster transfer protein NUBPL</fullName>
    </recommendedName>
    <alternativeName>
        <fullName>Nucleotide-binding protein-like</fullName>
    </alternativeName>
</protein>
<name>NUBPL_MOUSE</name>
<accession>Q9CWD8</accession>
<accession>Q6P6K2</accession>
<comment type="function">
    <text evidence="1 2">Iron-sulfur cluster transfer protein involved in the assembly of the mitochondrial membrane respiratory chain NADH dehydrogenase (Complex I) (By similarity). May deliver one or more Fe-S clusters to complex I subunits (By similarity).</text>
</comment>
<comment type="cofactor">
    <cofactor evidence="1">
        <name>[4Fe-4S] cluster</name>
        <dbReference type="ChEBI" id="CHEBI:49883"/>
    </cofactor>
    <text evidence="1">Binds 1 [4Fe-4S] cluster.</text>
</comment>
<comment type="subcellular location">
    <subcellularLocation>
        <location evidence="1">Mitochondrion</location>
    </subcellularLocation>
</comment>
<comment type="similarity">
    <text evidence="4">Belongs to the Mrp/NBP35 ATP-binding proteins family.</text>
</comment>
<sequence length="319" mass="34139">MGTWRRLLLFGGVSLRGGGAATVPPRGCRALGCGRQLLGAESEALKQRRTQIMSRGLPKQKPIEGVREVIVVASGKGGVGKSTTAVNLALALAANDSSKAVGLLDVDVYGPSIPKMMNLRGNPELSPNNLMRPLLNYGIACMSMGFLVEETAPLVWRGLMVMSAIEKLLRQVDWGQLDYLVVDMPPGTGDVQLSVSQNIPISGAVIVSTPQDIALMDAHKGAEMFRKVNVPVLGLVQNMSVFQCPKCKHKTHIFGADGARKLAQTLDLDVLGDVPLHLSIREASDMGQPVVFSQPGSDEAKAYLHIASEVVRRLKSSPE</sequence>
<feature type="transit peptide" description="Mitochondrion" evidence="3">
    <location>
        <begin position="1"/>
        <end position="38"/>
    </location>
</feature>
<feature type="chain" id="PRO_0000184951" description="Iron-sulfur cluster transfer protein NUBPL">
    <location>
        <begin position="39"/>
        <end position="319"/>
    </location>
</feature>
<feature type="binding site" evidence="3">
    <location>
        <begin position="75"/>
        <end position="82"/>
    </location>
    <ligand>
        <name>ATP</name>
        <dbReference type="ChEBI" id="CHEBI:30616"/>
    </ligand>
</feature>
<feature type="sequence conflict" description="In Ref. 1; BAB27209." evidence="4" ref="1">
    <original>F</original>
    <variation>L</variation>
    <location>
        <position position="292"/>
    </location>
</feature>
<reference key="1">
    <citation type="journal article" date="2005" name="Science">
        <title>The transcriptional landscape of the mammalian genome.</title>
        <authorList>
            <person name="Carninci P."/>
            <person name="Kasukawa T."/>
            <person name="Katayama S."/>
            <person name="Gough J."/>
            <person name="Frith M.C."/>
            <person name="Maeda N."/>
            <person name="Oyama R."/>
            <person name="Ravasi T."/>
            <person name="Lenhard B."/>
            <person name="Wells C."/>
            <person name="Kodzius R."/>
            <person name="Shimokawa K."/>
            <person name="Bajic V.B."/>
            <person name="Brenner S.E."/>
            <person name="Batalov S."/>
            <person name="Forrest A.R."/>
            <person name="Zavolan M."/>
            <person name="Davis M.J."/>
            <person name="Wilming L.G."/>
            <person name="Aidinis V."/>
            <person name="Allen J.E."/>
            <person name="Ambesi-Impiombato A."/>
            <person name="Apweiler R."/>
            <person name="Aturaliya R.N."/>
            <person name="Bailey T.L."/>
            <person name="Bansal M."/>
            <person name="Baxter L."/>
            <person name="Beisel K.W."/>
            <person name="Bersano T."/>
            <person name="Bono H."/>
            <person name="Chalk A.M."/>
            <person name="Chiu K.P."/>
            <person name="Choudhary V."/>
            <person name="Christoffels A."/>
            <person name="Clutterbuck D.R."/>
            <person name="Crowe M.L."/>
            <person name="Dalla E."/>
            <person name="Dalrymple B.P."/>
            <person name="de Bono B."/>
            <person name="Della Gatta G."/>
            <person name="di Bernardo D."/>
            <person name="Down T."/>
            <person name="Engstrom P."/>
            <person name="Fagiolini M."/>
            <person name="Faulkner G."/>
            <person name="Fletcher C.F."/>
            <person name="Fukushima T."/>
            <person name="Furuno M."/>
            <person name="Futaki S."/>
            <person name="Gariboldi M."/>
            <person name="Georgii-Hemming P."/>
            <person name="Gingeras T.R."/>
            <person name="Gojobori T."/>
            <person name="Green R.E."/>
            <person name="Gustincich S."/>
            <person name="Harbers M."/>
            <person name="Hayashi Y."/>
            <person name="Hensch T.K."/>
            <person name="Hirokawa N."/>
            <person name="Hill D."/>
            <person name="Huminiecki L."/>
            <person name="Iacono M."/>
            <person name="Ikeo K."/>
            <person name="Iwama A."/>
            <person name="Ishikawa T."/>
            <person name="Jakt M."/>
            <person name="Kanapin A."/>
            <person name="Katoh M."/>
            <person name="Kawasawa Y."/>
            <person name="Kelso J."/>
            <person name="Kitamura H."/>
            <person name="Kitano H."/>
            <person name="Kollias G."/>
            <person name="Krishnan S.P."/>
            <person name="Kruger A."/>
            <person name="Kummerfeld S.K."/>
            <person name="Kurochkin I.V."/>
            <person name="Lareau L.F."/>
            <person name="Lazarevic D."/>
            <person name="Lipovich L."/>
            <person name="Liu J."/>
            <person name="Liuni S."/>
            <person name="McWilliam S."/>
            <person name="Madan Babu M."/>
            <person name="Madera M."/>
            <person name="Marchionni L."/>
            <person name="Matsuda H."/>
            <person name="Matsuzawa S."/>
            <person name="Miki H."/>
            <person name="Mignone F."/>
            <person name="Miyake S."/>
            <person name="Morris K."/>
            <person name="Mottagui-Tabar S."/>
            <person name="Mulder N."/>
            <person name="Nakano N."/>
            <person name="Nakauchi H."/>
            <person name="Ng P."/>
            <person name="Nilsson R."/>
            <person name="Nishiguchi S."/>
            <person name="Nishikawa S."/>
            <person name="Nori F."/>
            <person name="Ohara O."/>
            <person name="Okazaki Y."/>
            <person name="Orlando V."/>
            <person name="Pang K.C."/>
            <person name="Pavan W.J."/>
            <person name="Pavesi G."/>
            <person name="Pesole G."/>
            <person name="Petrovsky N."/>
            <person name="Piazza S."/>
            <person name="Reed J."/>
            <person name="Reid J.F."/>
            <person name="Ring B.Z."/>
            <person name="Ringwald M."/>
            <person name="Rost B."/>
            <person name="Ruan Y."/>
            <person name="Salzberg S.L."/>
            <person name="Sandelin A."/>
            <person name="Schneider C."/>
            <person name="Schoenbach C."/>
            <person name="Sekiguchi K."/>
            <person name="Semple C.A."/>
            <person name="Seno S."/>
            <person name="Sessa L."/>
            <person name="Sheng Y."/>
            <person name="Shibata Y."/>
            <person name="Shimada H."/>
            <person name="Shimada K."/>
            <person name="Silva D."/>
            <person name="Sinclair B."/>
            <person name="Sperling S."/>
            <person name="Stupka E."/>
            <person name="Sugiura K."/>
            <person name="Sultana R."/>
            <person name="Takenaka Y."/>
            <person name="Taki K."/>
            <person name="Tammoja K."/>
            <person name="Tan S.L."/>
            <person name="Tang S."/>
            <person name="Taylor M.S."/>
            <person name="Tegner J."/>
            <person name="Teichmann S.A."/>
            <person name="Ueda H.R."/>
            <person name="van Nimwegen E."/>
            <person name="Verardo R."/>
            <person name="Wei C.L."/>
            <person name="Yagi K."/>
            <person name="Yamanishi H."/>
            <person name="Zabarovsky E."/>
            <person name="Zhu S."/>
            <person name="Zimmer A."/>
            <person name="Hide W."/>
            <person name="Bult C."/>
            <person name="Grimmond S.M."/>
            <person name="Teasdale R.D."/>
            <person name="Liu E.T."/>
            <person name="Brusic V."/>
            <person name="Quackenbush J."/>
            <person name="Wahlestedt C."/>
            <person name="Mattick J.S."/>
            <person name="Hume D.A."/>
            <person name="Kai C."/>
            <person name="Sasaki D."/>
            <person name="Tomaru Y."/>
            <person name="Fukuda S."/>
            <person name="Kanamori-Katayama M."/>
            <person name="Suzuki M."/>
            <person name="Aoki J."/>
            <person name="Arakawa T."/>
            <person name="Iida J."/>
            <person name="Imamura K."/>
            <person name="Itoh M."/>
            <person name="Kato T."/>
            <person name="Kawaji H."/>
            <person name="Kawagashira N."/>
            <person name="Kawashima T."/>
            <person name="Kojima M."/>
            <person name="Kondo S."/>
            <person name="Konno H."/>
            <person name="Nakano K."/>
            <person name="Ninomiya N."/>
            <person name="Nishio T."/>
            <person name="Okada M."/>
            <person name="Plessy C."/>
            <person name="Shibata K."/>
            <person name="Shiraki T."/>
            <person name="Suzuki S."/>
            <person name="Tagami M."/>
            <person name="Waki K."/>
            <person name="Watahiki A."/>
            <person name="Okamura-Oho Y."/>
            <person name="Suzuki H."/>
            <person name="Kawai J."/>
            <person name="Hayashizaki Y."/>
        </authorList>
    </citation>
    <scope>NUCLEOTIDE SEQUENCE [LARGE SCALE MRNA]</scope>
    <source>
        <strain>C57BL/6J</strain>
        <tissue>Embryonic stem cell</tissue>
        <tissue>Head</tissue>
    </source>
</reference>
<reference key="2">
    <citation type="journal article" date="2004" name="Genome Res.">
        <title>The status, quality, and expansion of the NIH full-length cDNA project: the Mammalian Gene Collection (MGC).</title>
        <authorList>
            <consortium name="The MGC Project Team"/>
        </authorList>
    </citation>
    <scope>NUCLEOTIDE SEQUENCE [LARGE SCALE MRNA]</scope>
</reference>
<reference key="3">
    <citation type="journal article" date="2010" name="Cell">
        <title>A tissue-specific atlas of mouse protein phosphorylation and expression.</title>
        <authorList>
            <person name="Huttlin E.L."/>
            <person name="Jedrychowski M.P."/>
            <person name="Elias J.E."/>
            <person name="Goswami T."/>
            <person name="Rad R."/>
            <person name="Beausoleil S.A."/>
            <person name="Villen J."/>
            <person name="Haas W."/>
            <person name="Sowa M.E."/>
            <person name="Gygi S.P."/>
        </authorList>
    </citation>
    <scope>IDENTIFICATION BY MASS SPECTROMETRY [LARGE SCALE ANALYSIS]</scope>
    <source>
        <tissue>Brain</tissue>
        <tissue>Brown adipose tissue</tissue>
        <tissue>Heart</tissue>
        <tissue>Kidney</tissue>
        <tissue>Liver</tissue>
        <tissue>Spleen</tissue>
    </source>
</reference>
<organism>
    <name type="scientific">Mus musculus</name>
    <name type="common">Mouse</name>
    <dbReference type="NCBI Taxonomy" id="10090"/>
    <lineage>
        <taxon>Eukaryota</taxon>
        <taxon>Metazoa</taxon>
        <taxon>Chordata</taxon>
        <taxon>Craniata</taxon>
        <taxon>Vertebrata</taxon>
        <taxon>Euteleostomi</taxon>
        <taxon>Mammalia</taxon>
        <taxon>Eutheria</taxon>
        <taxon>Euarchontoglires</taxon>
        <taxon>Glires</taxon>
        <taxon>Rodentia</taxon>
        <taxon>Myomorpha</taxon>
        <taxon>Muroidea</taxon>
        <taxon>Muridae</taxon>
        <taxon>Murinae</taxon>
        <taxon>Mus</taxon>
        <taxon>Mus</taxon>
    </lineage>
</organism>
<evidence type="ECO:0000250" key="1"/>
<evidence type="ECO:0000250" key="2">
    <source>
        <dbReference type="UniProtKB" id="Q8TB37"/>
    </source>
</evidence>
<evidence type="ECO:0000255" key="3"/>
<evidence type="ECO:0000305" key="4"/>
<gene>
    <name type="primary">Nubpl</name>
</gene>